<sequence length="251" mass="28073">MVDKSQETTHFGFQTVAKEQKADMVAHVFHSVASKYDVMNDLMSFGIHRLWKRFTIDCSGVRRGQTVLDLAGGTGDLTAKFSRLVGETGKVVLADINESMLKMGREKLRNIGVIGNVEYVQANAEALPFPDNTFDCITISFGLRNVTDKDKALRSMYRVLKPGGRLLVLEFSKPIIEPLSKAYDAYSFHVLPRIGSLVANDADSYRYLAESIRMHPDQDTLKAMMQDAGFESVDYYNLTAGVVALHRGYKF</sequence>
<comment type="function">
    <text evidence="1">Methyltransferase required for the conversion of demethylmenaquinol (DMKH2) to menaquinol (MKH2) and the conversion of 2-polyprenyl-6-methoxy-1,4-benzoquinol (DDMQH2) to 2-polyprenyl-3-methyl-6-methoxy-1,4-benzoquinol (DMQH2).</text>
</comment>
<comment type="catalytic activity">
    <reaction evidence="1">
        <text>a 2-demethylmenaquinol + S-adenosyl-L-methionine = a menaquinol + S-adenosyl-L-homocysteine + H(+)</text>
        <dbReference type="Rhea" id="RHEA:42640"/>
        <dbReference type="Rhea" id="RHEA-COMP:9539"/>
        <dbReference type="Rhea" id="RHEA-COMP:9563"/>
        <dbReference type="ChEBI" id="CHEBI:15378"/>
        <dbReference type="ChEBI" id="CHEBI:18151"/>
        <dbReference type="ChEBI" id="CHEBI:55437"/>
        <dbReference type="ChEBI" id="CHEBI:57856"/>
        <dbReference type="ChEBI" id="CHEBI:59789"/>
        <dbReference type="EC" id="2.1.1.163"/>
    </reaction>
</comment>
<comment type="catalytic activity">
    <reaction evidence="1">
        <text>a 2-methoxy-6-(all-trans-polyprenyl)benzene-1,4-diol + S-adenosyl-L-methionine = a 5-methoxy-2-methyl-3-(all-trans-polyprenyl)benzene-1,4-diol + S-adenosyl-L-homocysteine + H(+)</text>
        <dbReference type="Rhea" id="RHEA:28286"/>
        <dbReference type="Rhea" id="RHEA-COMP:10858"/>
        <dbReference type="Rhea" id="RHEA-COMP:10859"/>
        <dbReference type="ChEBI" id="CHEBI:15378"/>
        <dbReference type="ChEBI" id="CHEBI:57856"/>
        <dbReference type="ChEBI" id="CHEBI:59789"/>
        <dbReference type="ChEBI" id="CHEBI:84166"/>
        <dbReference type="ChEBI" id="CHEBI:84167"/>
        <dbReference type="EC" id="2.1.1.201"/>
    </reaction>
</comment>
<comment type="pathway">
    <text evidence="1">Quinol/quinone metabolism; menaquinone biosynthesis; menaquinol from 1,4-dihydroxy-2-naphthoate: step 2/2.</text>
</comment>
<comment type="pathway">
    <text evidence="1">Cofactor biosynthesis; ubiquinone biosynthesis.</text>
</comment>
<comment type="similarity">
    <text evidence="1">Belongs to the class I-like SAM-binding methyltransferase superfamily. MenG/UbiE family.</text>
</comment>
<accession>B2TVI4</accession>
<keyword id="KW-0474">Menaquinone biosynthesis</keyword>
<keyword id="KW-0489">Methyltransferase</keyword>
<keyword id="KW-1185">Reference proteome</keyword>
<keyword id="KW-0949">S-adenosyl-L-methionine</keyword>
<keyword id="KW-0808">Transferase</keyword>
<keyword id="KW-0831">Ubiquinone biosynthesis</keyword>
<dbReference type="EC" id="2.1.1.163" evidence="1"/>
<dbReference type="EC" id="2.1.1.201" evidence="1"/>
<dbReference type="EMBL" id="CP001063">
    <property type="protein sequence ID" value="ACD07351.1"/>
    <property type="molecule type" value="Genomic_DNA"/>
</dbReference>
<dbReference type="RefSeq" id="WP_000227958.1">
    <property type="nucleotide sequence ID" value="NC_010658.1"/>
</dbReference>
<dbReference type="SMR" id="B2TVI4"/>
<dbReference type="STRING" id="344609.SbBS512_E4305"/>
<dbReference type="GeneID" id="93778102"/>
<dbReference type="KEGG" id="sbc:SbBS512_E4305"/>
<dbReference type="HOGENOM" id="CLU_037990_0_0_6"/>
<dbReference type="UniPathway" id="UPA00079">
    <property type="reaction ID" value="UER00169"/>
</dbReference>
<dbReference type="UniPathway" id="UPA00232"/>
<dbReference type="Proteomes" id="UP000001030">
    <property type="component" value="Chromosome"/>
</dbReference>
<dbReference type="GO" id="GO:0008425">
    <property type="term" value="F:2-methoxy-6-polyprenyl-1,4-benzoquinol methyltransferase activity"/>
    <property type="evidence" value="ECO:0007669"/>
    <property type="project" value="UniProtKB-UniRule"/>
</dbReference>
<dbReference type="GO" id="GO:0043770">
    <property type="term" value="F:demethylmenaquinone methyltransferase activity"/>
    <property type="evidence" value="ECO:0007669"/>
    <property type="project" value="UniProtKB-UniRule"/>
</dbReference>
<dbReference type="GO" id="GO:0009060">
    <property type="term" value="P:aerobic respiration"/>
    <property type="evidence" value="ECO:0007669"/>
    <property type="project" value="UniProtKB-UniRule"/>
</dbReference>
<dbReference type="GO" id="GO:0009234">
    <property type="term" value="P:menaquinone biosynthetic process"/>
    <property type="evidence" value="ECO:0007669"/>
    <property type="project" value="UniProtKB-UniRule"/>
</dbReference>
<dbReference type="GO" id="GO:0032259">
    <property type="term" value="P:methylation"/>
    <property type="evidence" value="ECO:0007669"/>
    <property type="project" value="UniProtKB-KW"/>
</dbReference>
<dbReference type="CDD" id="cd02440">
    <property type="entry name" value="AdoMet_MTases"/>
    <property type="match status" value="1"/>
</dbReference>
<dbReference type="FunFam" id="3.40.50.150:FF:000014">
    <property type="entry name" value="Ubiquinone/menaquinone biosynthesis C-methyltransferase UbiE"/>
    <property type="match status" value="1"/>
</dbReference>
<dbReference type="Gene3D" id="3.40.50.150">
    <property type="entry name" value="Vaccinia Virus protein VP39"/>
    <property type="match status" value="1"/>
</dbReference>
<dbReference type="HAMAP" id="MF_01813">
    <property type="entry name" value="MenG_UbiE_methyltr"/>
    <property type="match status" value="1"/>
</dbReference>
<dbReference type="InterPro" id="IPR029063">
    <property type="entry name" value="SAM-dependent_MTases_sf"/>
</dbReference>
<dbReference type="InterPro" id="IPR004033">
    <property type="entry name" value="UbiE/COQ5_MeTrFase"/>
</dbReference>
<dbReference type="InterPro" id="IPR023576">
    <property type="entry name" value="UbiE/COQ5_MeTrFase_CS"/>
</dbReference>
<dbReference type="NCBIfam" id="TIGR01934">
    <property type="entry name" value="MenG_MenH_UbiE"/>
    <property type="match status" value="1"/>
</dbReference>
<dbReference type="NCBIfam" id="NF001240">
    <property type="entry name" value="PRK00216.1-1"/>
    <property type="match status" value="1"/>
</dbReference>
<dbReference type="NCBIfam" id="NF001242">
    <property type="entry name" value="PRK00216.1-3"/>
    <property type="match status" value="1"/>
</dbReference>
<dbReference type="NCBIfam" id="NF001244">
    <property type="entry name" value="PRK00216.1-5"/>
    <property type="match status" value="1"/>
</dbReference>
<dbReference type="PANTHER" id="PTHR43591:SF24">
    <property type="entry name" value="2-METHOXY-6-POLYPRENYL-1,4-BENZOQUINOL METHYLASE, MITOCHONDRIAL"/>
    <property type="match status" value="1"/>
</dbReference>
<dbReference type="PANTHER" id="PTHR43591">
    <property type="entry name" value="METHYLTRANSFERASE"/>
    <property type="match status" value="1"/>
</dbReference>
<dbReference type="Pfam" id="PF01209">
    <property type="entry name" value="Ubie_methyltran"/>
    <property type="match status" value="1"/>
</dbReference>
<dbReference type="SUPFAM" id="SSF53335">
    <property type="entry name" value="S-adenosyl-L-methionine-dependent methyltransferases"/>
    <property type="match status" value="1"/>
</dbReference>
<dbReference type="PROSITE" id="PS51608">
    <property type="entry name" value="SAM_MT_UBIE"/>
    <property type="match status" value="1"/>
</dbReference>
<dbReference type="PROSITE" id="PS01183">
    <property type="entry name" value="UBIE_1"/>
    <property type="match status" value="1"/>
</dbReference>
<dbReference type="PROSITE" id="PS01184">
    <property type="entry name" value="UBIE_2"/>
    <property type="match status" value="1"/>
</dbReference>
<reference key="1">
    <citation type="submission" date="2008-05" db="EMBL/GenBank/DDBJ databases">
        <title>Complete sequence of Shigella boydii serotype 18 strain BS512.</title>
        <authorList>
            <person name="Rasko D.A."/>
            <person name="Rosovitz M."/>
            <person name="Maurelli A.T."/>
            <person name="Myers G."/>
            <person name="Seshadri R."/>
            <person name="Cer R."/>
            <person name="Jiang L."/>
            <person name="Ravel J."/>
            <person name="Sebastian Y."/>
        </authorList>
    </citation>
    <scope>NUCLEOTIDE SEQUENCE [LARGE SCALE GENOMIC DNA]</scope>
    <source>
        <strain>CDC 3083-94 / BS512</strain>
    </source>
</reference>
<organism>
    <name type="scientific">Shigella boydii serotype 18 (strain CDC 3083-94 / BS512)</name>
    <dbReference type="NCBI Taxonomy" id="344609"/>
    <lineage>
        <taxon>Bacteria</taxon>
        <taxon>Pseudomonadati</taxon>
        <taxon>Pseudomonadota</taxon>
        <taxon>Gammaproteobacteria</taxon>
        <taxon>Enterobacterales</taxon>
        <taxon>Enterobacteriaceae</taxon>
        <taxon>Shigella</taxon>
    </lineage>
</organism>
<name>UBIE_SHIB3</name>
<feature type="chain" id="PRO_1000187814" description="Ubiquinone/menaquinone biosynthesis C-methyltransferase UbiE">
    <location>
        <begin position="1"/>
        <end position="251"/>
    </location>
</feature>
<feature type="binding site" evidence="1">
    <location>
        <position position="74"/>
    </location>
    <ligand>
        <name>S-adenosyl-L-methionine</name>
        <dbReference type="ChEBI" id="CHEBI:59789"/>
    </ligand>
</feature>
<feature type="binding site" evidence="1">
    <location>
        <position position="95"/>
    </location>
    <ligand>
        <name>S-adenosyl-L-methionine</name>
        <dbReference type="ChEBI" id="CHEBI:59789"/>
    </ligand>
</feature>
<feature type="binding site" evidence="1">
    <location>
        <begin position="123"/>
        <end position="124"/>
    </location>
    <ligand>
        <name>S-adenosyl-L-methionine</name>
        <dbReference type="ChEBI" id="CHEBI:59789"/>
    </ligand>
</feature>
<feature type="binding site" evidence="1">
    <location>
        <position position="140"/>
    </location>
    <ligand>
        <name>S-adenosyl-L-methionine</name>
        <dbReference type="ChEBI" id="CHEBI:59789"/>
    </ligand>
</feature>
<proteinExistence type="inferred from homology"/>
<gene>
    <name evidence="1" type="primary">ubiE</name>
    <name type="ordered locus">SbBS512_E4305</name>
</gene>
<evidence type="ECO:0000255" key="1">
    <source>
        <dbReference type="HAMAP-Rule" id="MF_01813"/>
    </source>
</evidence>
<protein>
    <recommendedName>
        <fullName evidence="1">Ubiquinone/menaquinone biosynthesis C-methyltransferase UbiE</fullName>
        <ecNumber evidence="1">2.1.1.163</ecNumber>
        <ecNumber evidence="1">2.1.1.201</ecNumber>
    </recommendedName>
    <alternativeName>
        <fullName evidence="1">2-methoxy-6-polyprenyl-1,4-benzoquinol methylase</fullName>
    </alternativeName>
    <alternativeName>
        <fullName evidence="1">Demethylmenaquinone methyltransferase</fullName>
    </alternativeName>
</protein>